<reference key="1">
    <citation type="journal article" date="2009" name="Genome Res.">
        <title>Whole genome sequence of Desulfovibrio magneticus strain RS-1 revealed common gene clusters in magnetotactic bacteria.</title>
        <authorList>
            <person name="Nakazawa H."/>
            <person name="Arakaki A."/>
            <person name="Narita-Yamada S."/>
            <person name="Yashiro I."/>
            <person name="Jinno K."/>
            <person name="Aoki N."/>
            <person name="Tsuruyama A."/>
            <person name="Okamura Y."/>
            <person name="Tanikawa S."/>
            <person name="Fujita N."/>
            <person name="Takeyama H."/>
            <person name="Matsunaga T."/>
        </authorList>
    </citation>
    <scope>NUCLEOTIDE SEQUENCE [LARGE SCALE GENOMIC DNA]</scope>
    <source>
        <strain>ATCC 700980 / DSM 13731 / RS-1</strain>
    </source>
</reference>
<evidence type="ECO:0000255" key="1">
    <source>
        <dbReference type="HAMAP-Rule" id="MF_00476"/>
    </source>
</evidence>
<sequence length="139" mass="15673">MGQTIRFGVSLNSELLEKFDALCDEKSYQTRSEAIRDLIRGVLVQKEWEQSDKEVAGVLTLVYDHHTSDLAQRLIETQHEQHDVILSSMHVHLDHHNCLEALVLKGPGEAVQRLSQKLISTRGVKYGKLTLATTGQEIV</sequence>
<accession>C4XJB6</accession>
<organism>
    <name type="scientific">Solidesulfovibrio magneticus (strain ATCC 700980 / DSM 13731 / RS-1)</name>
    <name type="common">Desulfovibrio magneticus</name>
    <dbReference type="NCBI Taxonomy" id="573370"/>
    <lineage>
        <taxon>Bacteria</taxon>
        <taxon>Pseudomonadati</taxon>
        <taxon>Thermodesulfobacteriota</taxon>
        <taxon>Desulfovibrionia</taxon>
        <taxon>Desulfovibrionales</taxon>
        <taxon>Desulfovibrionaceae</taxon>
        <taxon>Solidesulfovibrio</taxon>
    </lineage>
</organism>
<dbReference type="EMBL" id="AP010904">
    <property type="protein sequence ID" value="BAH76666.1"/>
    <property type="molecule type" value="Genomic_DNA"/>
</dbReference>
<dbReference type="SMR" id="C4XJB6"/>
<dbReference type="STRING" id="573370.DMR_31750"/>
<dbReference type="KEGG" id="dma:DMR_31750"/>
<dbReference type="eggNOG" id="COG0864">
    <property type="taxonomic scope" value="Bacteria"/>
</dbReference>
<dbReference type="HOGENOM" id="CLU_113319_1_2_7"/>
<dbReference type="OrthoDB" id="9806294at2"/>
<dbReference type="Proteomes" id="UP000009071">
    <property type="component" value="Chromosome"/>
</dbReference>
<dbReference type="GO" id="GO:0003677">
    <property type="term" value="F:DNA binding"/>
    <property type="evidence" value="ECO:0007669"/>
    <property type="project" value="UniProtKB-KW"/>
</dbReference>
<dbReference type="GO" id="GO:0003700">
    <property type="term" value="F:DNA-binding transcription factor activity"/>
    <property type="evidence" value="ECO:0007669"/>
    <property type="project" value="UniProtKB-UniRule"/>
</dbReference>
<dbReference type="GO" id="GO:0016151">
    <property type="term" value="F:nickel cation binding"/>
    <property type="evidence" value="ECO:0007669"/>
    <property type="project" value="UniProtKB-UniRule"/>
</dbReference>
<dbReference type="GO" id="GO:0010045">
    <property type="term" value="P:response to nickel cation"/>
    <property type="evidence" value="ECO:0007669"/>
    <property type="project" value="InterPro"/>
</dbReference>
<dbReference type="CDD" id="cd22231">
    <property type="entry name" value="RHH_NikR_HicB-like"/>
    <property type="match status" value="1"/>
</dbReference>
<dbReference type="Gene3D" id="3.30.70.1150">
    <property type="entry name" value="ACT-like. Chain A, domain 2"/>
    <property type="match status" value="1"/>
</dbReference>
<dbReference type="Gene3D" id="1.10.1220.10">
    <property type="entry name" value="Met repressor-like"/>
    <property type="match status" value="1"/>
</dbReference>
<dbReference type="HAMAP" id="MF_00476">
    <property type="entry name" value="NikR"/>
    <property type="match status" value="1"/>
</dbReference>
<dbReference type="InterPro" id="IPR027271">
    <property type="entry name" value="Acetolactate_synth/TF_NikR_C"/>
</dbReference>
<dbReference type="InterPro" id="IPR045865">
    <property type="entry name" value="ACT-like_dom_sf"/>
</dbReference>
<dbReference type="InterPro" id="IPR013321">
    <property type="entry name" value="Arc_rbn_hlx_hlx"/>
</dbReference>
<dbReference type="InterPro" id="IPR002145">
    <property type="entry name" value="CopG"/>
</dbReference>
<dbReference type="InterPro" id="IPR050192">
    <property type="entry name" value="CopG/NikR_regulator"/>
</dbReference>
<dbReference type="InterPro" id="IPR022988">
    <property type="entry name" value="Ni_resp_reg_NikR"/>
</dbReference>
<dbReference type="InterPro" id="IPR010985">
    <property type="entry name" value="Ribbon_hlx_hlx"/>
</dbReference>
<dbReference type="InterPro" id="IPR014864">
    <property type="entry name" value="TF_NikR_Ni-bd_C"/>
</dbReference>
<dbReference type="NCBIfam" id="NF001884">
    <property type="entry name" value="PRK00630.1"/>
    <property type="match status" value="1"/>
</dbReference>
<dbReference type="NCBIfam" id="NF002169">
    <property type="entry name" value="PRK01002.1"/>
    <property type="match status" value="1"/>
</dbReference>
<dbReference type="NCBIfam" id="NF002815">
    <property type="entry name" value="PRK02967.1"/>
    <property type="match status" value="1"/>
</dbReference>
<dbReference type="NCBIfam" id="NF003381">
    <property type="entry name" value="PRK04460.1"/>
    <property type="match status" value="1"/>
</dbReference>
<dbReference type="PANTHER" id="PTHR34719">
    <property type="entry name" value="NICKEL-RESPONSIVE REGULATOR"/>
    <property type="match status" value="1"/>
</dbReference>
<dbReference type="PANTHER" id="PTHR34719:SF2">
    <property type="entry name" value="NICKEL-RESPONSIVE REGULATOR"/>
    <property type="match status" value="1"/>
</dbReference>
<dbReference type="Pfam" id="PF08753">
    <property type="entry name" value="NikR_C"/>
    <property type="match status" value="1"/>
</dbReference>
<dbReference type="Pfam" id="PF01402">
    <property type="entry name" value="RHH_1"/>
    <property type="match status" value="1"/>
</dbReference>
<dbReference type="SUPFAM" id="SSF55021">
    <property type="entry name" value="ACT-like"/>
    <property type="match status" value="1"/>
</dbReference>
<dbReference type="SUPFAM" id="SSF47598">
    <property type="entry name" value="Ribbon-helix-helix"/>
    <property type="match status" value="1"/>
</dbReference>
<gene>
    <name type="ordered locus">DMR_31750</name>
</gene>
<protein>
    <recommendedName>
        <fullName evidence="1">Putative nickel-responsive regulator</fullName>
    </recommendedName>
</protein>
<feature type="chain" id="PRO_1000206377" description="Putative nickel-responsive regulator">
    <location>
        <begin position="1"/>
        <end position="139"/>
    </location>
</feature>
<feature type="binding site" evidence="1">
    <location>
        <position position="79"/>
    </location>
    <ligand>
        <name>Ni(2+)</name>
        <dbReference type="ChEBI" id="CHEBI:49786"/>
    </ligand>
</feature>
<feature type="binding site" evidence="1">
    <location>
        <position position="90"/>
    </location>
    <ligand>
        <name>Ni(2+)</name>
        <dbReference type="ChEBI" id="CHEBI:49786"/>
    </ligand>
</feature>
<feature type="binding site" evidence="1">
    <location>
        <position position="92"/>
    </location>
    <ligand>
        <name>Ni(2+)</name>
        <dbReference type="ChEBI" id="CHEBI:49786"/>
    </ligand>
</feature>
<feature type="binding site" evidence="1">
    <location>
        <position position="98"/>
    </location>
    <ligand>
        <name>Ni(2+)</name>
        <dbReference type="ChEBI" id="CHEBI:49786"/>
    </ligand>
</feature>
<proteinExistence type="inferred from homology"/>
<name>NIKR_SOLM1</name>
<keyword id="KW-0238">DNA-binding</keyword>
<keyword id="KW-0479">Metal-binding</keyword>
<keyword id="KW-0533">Nickel</keyword>
<keyword id="KW-0804">Transcription</keyword>
<keyword id="KW-0805">Transcription regulation</keyword>
<comment type="function">
    <text evidence="1">Transcriptional regulator.</text>
</comment>
<comment type="cofactor">
    <cofactor evidence="1">
        <name>Ni(2+)</name>
        <dbReference type="ChEBI" id="CHEBI:49786"/>
    </cofactor>
    <text evidence="1">Binds 1 nickel ion per subunit.</text>
</comment>
<comment type="similarity">
    <text evidence="1">Belongs to the transcriptional regulatory CopG/NikR family.</text>
</comment>